<dbReference type="EC" id="2.7.7.102" evidence="4"/>
<dbReference type="EMBL" id="LN999946">
    <property type="protein sequence ID" value="CZU00083.1"/>
    <property type="molecule type" value="Genomic_DNA"/>
</dbReference>
<dbReference type="RefSeq" id="XP_001348540.1">
    <property type="nucleotide sequence ID" value="XM_001348504.1"/>
</dbReference>
<dbReference type="SMR" id="Q7KQM1"/>
<dbReference type="FunCoup" id="Q7KQM1">
    <property type="interactions" value="196"/>
</dbReference>
<dbReference type="STRING" id="36329.Q7KQM1"/>
<dbReference type="PaxDb" id="5833-PF14_0366"/>
<dbReference type="EnsemblProtists" id="CZU00083">
    <property type="protein sequence ID" value="CZU00083"/>
    <property type="gene ID" value="PF3D7_1438700"/>
</dbReference>
<dbReference type="GeneID" id="811948"/>
<dbReference type="KEGG" id="pfa:PF3D7_1438700"/>
<dbReference type="VEuPathDB" id="PlasmoDB:PF3D7_1438700"/>
<dbReference type="HOGENOM" id="CLU_028288_3_2_1"/>
<dbReference type="InParanoid" id="Q7KQM1"/>
<dbReference type="OMA" id="NVTRGFN"/>
<dbReference type="OrthoDB" id="19606at2759"/>
<dbReference type="PhylomeDB" id="Q7KQM1"/>
<dbReference type="Reactome" id="R-PFA-113501">
    <property type="pathway name" value="Inhibition of replication initiation of damaged DNA by RB1/E2F1"/>
</dbReference>
<dbReference type="Reactome" id="R-PFA-68952">
    <property type="pathway name" value="DNA replication initiation"/>
</dbReference>
<dbReference type="Reactome" id="R-PFA-68962">
    <property type="pathway name" value="Activation of the pre-replicative complex"/>
</dbReference>
<dbReference type="Reactome" id="R-PFA-69091">
    <property type="pathway name" value="Polymerase switching"/>
</dbReference>
<dbReference type="Reactome" id="R-PFA-69166">
    <property type="pathway name" value="Removal of the Flap Intermediate"/>
</dbReference>
<dbReference type="Reactome" id="R-PFA-69183">
    <property type="pathway name" value="Processive synthesis on the lagging strand"/>
</dbReference>
<dbReference type="Proteomes" id="UP000001450">
    <property type="component" value="Chromosome 14"/>
</dbReference>
<dbReference type="GO" id="GO:0005658">
    <property type="term" value="C:alpha DNA polymerase:primase complex"/>
    <property type="evidence" value="ECO:0000250"/>
    <property type="project" value="GeneDB"/>
</dbReference>
<dbReference type="GO" id="GO:0003899">
    <property type="term" value="F:DNA-directed RNA polymerase activity"/>
    <property type="evidence" value="ECO:0007669"/>
    <property type="project" value="InterPro"/>
</dbReference>
<dbReference type="GO" id="GO:0046872">
    <property type="term" value="F:metal ion binding"/>
    <property type="evidence" value="ECO:0007669"/>
    <property type="project" value="UniProtKB-KW"/>
</dbReference>
<dbReference type="GO" id="GO:0006269">
    <property type="term" value="P:DNA replication, synthesis of primer"/>
    <property type="evidence" value="ECO:0000250"/>
    <property type="project" value="GeneDB"/>
</dbReference>
<dbReference type="CDD" id="cd04860">
    <property type="entry name" value="AE_Prim_S"/>
    <property type="match status" value="1"/>
</dbReference>
<dbReference type="FunFam" id="3.90.920.10:FF:000004">
    <property type="entry name" value="DNA primase"/>
    <property type="match status" value="1"/>
</dbReference>
<dbReference type="Gene3D" id="3.90.920.10">
    <property type="entry name" value="DNA primase, PRIM domain"/>
    <property type="match status" value="1"/>
</dbReference>
<dbReference type="InterPro" id="IPR002755">
    <property type="entry name" value="DNA_primase_S"/>
</dbReference>
<dbReference type="InterPro" id="IPR014052">
    <property type="entry name" value="DNA_primase_ssu_euk/arc"/>
</dbReference>
<dbReference type="NCBIfam" id="TIGR00335">
    <property type="entry name" value="primase_sml"/>
    <property type="match status" value="1"/>
</dbReference>
<dbReference type="PANTHER" id="PTHR10536">
    <property type="entry name" value="DNA PRIMASE SMALL SUBUNIT"/>
    <property type="match status" value="1"/>
</dbReference>
<dbReference type="Pfam" id="PF01896">
    <property type="entry name" value="DNA_primase_S"/>
    <property type="match status" value="1"/>
</dbReference>
<dbReference type="SUPFAM" id="SSF56747">
    <property type="entry name" value="Prim-pol domain"/>
    <property type="match status" value="1"/>
</dbReference>
<evidence type="ECO:0000250" key="1"/>
<evidence type="ECO:0000250" key="2">
    <source>
        <dbReference type="UniProtKB" id="P20664"/>
    </source>
</evidence>
<evidence type="ECO:0000250" key="3">
    <source>
        <dbReference type="UniProtKB" id="P49642"/>
    </source>
</evidence>
<evidence type="ECO:0000250" key="4">
    <source>
        <dbReference type="UniProtKB" id="Q25998"/>
    </source>
</evidence>
<evidence type="ECO:0000255" key="5"/>
<evidence type="ECO:0000305" key="6"/>
<proteinExistence type="inferred from homology"/>
<protein>
    <recommendedName>
        <fullName evidence="4">DNA primase small subunit</fullName>
        <ecNumber evidence="4">2.7.7.102</ecNumber>
    </recommendedName>
    <alternativeName>
        <fullName evidence="4">DNA primase 53 kDa subunit</fullName>
    </alternativeName>
</protein>
<accession>Q7KQM1</accession>
<accession>A0A144A659</accession>
<keyword id="KW-0235">DNA replication</keyword>
<keyword id="KW-0240">DNA-directed RNA polymerase</keyword>
<keyword id="KW-0460">Magnesium</keyword>
<keyword id="KW-0464">Manganese</keyword>
<keyword id="KW-0479">Metal-binding</keyword>
<keyword id="KW-0548">Nucleotidyltransferase</keyword>
<keyword id="KW-0639">Primosome</keyword>
<keyword id="KW-1185">Reference proteome</keyword>
<keyword id="KW-0804">Transcription</keyword>
<keyword id="KW-0808">Transferase</keyword>
<keyword id="KW-0862">Zinc</keyword>
<sequence>MKMEIVGDIKDSIVNENDLIFYYRSLCPINDLYNWLNYKNDIKGKYTKLNDPHFFSKREFSFTCKKSDQGKEEIYIRWLSFSNPEEFKNKLLSDLVPIKFDIGAIYNFPVSQKDQKGDIFLPVQKELIFDIDMNDYDDIRTCCTDKKVCKLCWKFLTVAIVLLDTALREDFSFEHILWVYSGRRGIHCWVADESCRYYTTDARAALADYLNILSGSDTKKKKVSIWGKDKYPMFERAFDICYKYFDVLMEEQDFFKKGSPHVQKLIDYLPYASGKVTDPLKAMKLNELKEYINNNNFNSREIFEKFSSIYNFLTPSNYFKRKNVSGNINMPSFVKEIVFHFTYPRLDINVSKEINHLLKSPFCIHNSTGRVCVPLDIKNINNFNPQSVPTLKLLREQFDDPKNSHIEAENRTSLKPYIDYFRRHFIENILLSCVEKKKRLNENSKYVDYNNI</sequence>
<comment type="function">
    <text evidence="4">Catalytic subunit of the DNA primase complex and component of the DNA polymerase alpha complex (also known as the alpha DNA polymerase-primase complex - primosome/replisome) which play an essential role in the initiation of DNA synthesis (By similarity). The primase subunit of the polymerase alpha complex initiates DNA synthesis by oligomerising short RNA primers on both leading and lagging strands (By similarity).</text>
</comment>
<comment type="catalytic activity">
    <reaction evidence="4">
        <text>ssDNA + n dNTP = ssDNA/pppdN(pdN)n-1 hybrid + (n-1) diphosphate.</text>
        <dbReference type="EC" id="2.7.7.102"/>
    </reaction>
</comment>
<comment type="cofactor">
    <cofactor evidence="3">
        <name>Mg(2+)</name>
        <dbReference type="ChEBI" id="CHEBI:18420"/>
    </cofactor>
    <cofactor evidence="3">
        <name>Mn(2+)</name>
        <dbReference type="ChEBI" id="CHEBI:29035"/>
    </cofactor>
</comment>
<comment type="activity regulation">
    <text evidence="2">The presence of the regulatory subunit accelerates the kinetics of initiation and primer extension.</text>
</comment>
<comment type="subunit">
    <text evidence="3">Heterodimer of a catalytic subunit and a regulatory subunit, also known as the DNA primase complex.</text>
</comment>
<comment type="miscellaneous">
    <text evidence="1">The bound zinc ion is not a cofactor. It is bound to a zinc knuckle motif that may be involved in sequence recognition and the binding of ssDNA (By similarity).</text>
</comment>
<comment type="similarity">
    <text evidence="6">Belongs to the eukaryotic-type primase small subunit family.</text>
</comment>
<organism>
    <name type="scientific">Plasmodium falciparum (isolate 3D7)</name>
    <dbReference type="NCBI Taxonomy" id="36329"/>
    <lineage>
        <taxon>Eukaryota</taxon>
        <taxon>Sar</taxon>
        <taxon>Alveolata</taxon>
        <taxon>Apicomplexa</taxon>
        <taxon>Aconoidasida</taxon>
        <taxon>Haemosporida</taxon>
        <taxon>Plasmodiidae</taxon>
        <taxon>Plasmodium</taxon>
        <taxon>Plasmodium (Laverania)</taxon>
    </lineage>
</organism>
<name>PRI1_PLAF7</name>
<reference key="1">
    <citation type="journal article" date="2002" name="Nature">
        <title>Genome sequence of the human malaria parasite Plasmodium falciparum.</title>
        <authorList>
            <person name="Gardner M.J."/>
            <person name="Hall N."/>
            <person name="Fung E."/>
            <person name="White O."/>
            <person name="Berriman M."/>
            <person name="Hyman R.W."/>
            <person name="Carlton J.M."/>
            <person name="Pain A."/>
            <person name="Nelson K.E."/>
            <person name="Bowman S."/>
            <person name="Paulsen I.T."/>
            <person name="James K.D."/>
            <person name="Eisen J.A."/>
            <person name="Rutherford K.M."/>
            <person name="Salzberg S.L."/>
            <person name="Craig A."/>
            <person name="Kyes S."/>
            <person name="Chan M.-S."/>
            <person name="Nene V."/>
            <person name="Shallom S.J."/>
            <person name="Suh B."/>
            <person name="Peterson J."/>
            <person name="Angiuoli S."/>
            <person name="Pertea M."/>
            <person name="Allen J."/>
            <person name="Selengut J."/>
            <person name="Haft D."/>
            <person name="Mather M.W."/>
            <person name="Vaidya A.B."/>
            <person name="Martin D.M.A."/>
            <person name="Fairlamb A.H."/>
            <person name="Fraunholz M.J."/>
            <person name="Roos D.S."/>
            <person name="Ralph S.A."/>
            <person name="McFadden G.I."/>
            <person name="Cummings L.M."/>
            <person name="Subramanian G.M."/>
            <person name="Mungall C."/>
            <person name="Venter J.C."/>
            <person name="Carucci D.J."/>
            <person name="Hoffman S.L."/>
            <person name="Newbold C."/>
            <person name="Davis R.W."/>
            <person name="Fraser C.M."/>
            <person name="Barrell B.G."/>
        </authorList>
    </citation>
    <scope>NUCLEOTIDE SEQUENCE [LARGE SCALE GENOMIC DNA]</scope>
    <source>
        <strain>3D7</strain>
    </source>
</reference>
<gene>
    <name type="ORF">PF14_0366</name>
    <name type="ORF">PF3D7_1438700</name>
</gene>
<feature type="chain" id="PRO_0000233399" description="DNA primase small subunit">
    <location>
        <begin position="1"/>
        <end position="452"/>
    </location>
</feature>
<feature type="short sequence motif" description="Zinc knuckle motif" evidence="3">
    <location>
        <begin position="142"/>
        <end position="152"/>
    </location>
</feature>
<feature type="active site" evidence="5">
    <location>
        <position position="59"/>
    </location>
</feature>
<feature type="active site" evidence="5">
    <location>
        <position position="130"/>
    </location>
</feature>
<feature type="active site" evidence="5">
    <location>
        <position position="132"/>
    </location>
</feature>
<feature type="binding site" evidence="3">
    <location>
        <begin position="130"/>
        <end position="132"/>
    </location>
    <ligand>
        <name>a ribonucleoside 5'-triphosphate</name>
        <dbReference type="ChEBI" id="CHEBI:61557"/>
    </ligand>
</feature>
<feature type="binding site" evidence="3">
    <location>
        <position position="130"/>
    </location>
    <ligand>
        <name>Mg(2+)</name>
        <dbReference type="ChEBI" id="CHEBI:18420"/>
        <label>1</label>
    </ligand>
</feature>
<feature type="binding site" evidence="3">
    <location>
        <position position="130"/>
    </location>
    <ligand>
        <name>Mg(2+)</name>
        <dbReference type="ChEBI" id="CHEBI:18420"/>
        <label>2</label>
    </ligand>
</feature>
<feature type="binding site" evidence="3">
    <location>
        <position position="130"/>
    </location>
    <ligand>
        <name>Mn(2+)</name>
        <dbReference type="ChEBI" id="CHEBI:29035"/>
        <label>1</label>
    </ligand>
</feature>
<feature type="binding site" evidence="3">
    <location>
        <position position="130"/>
    </location>
    <ligand>
        <name>Mn(2+)</name>
        <dbReference type="ChEBI" id="CHEBI:29035"/>
        <label>2</label>
    </ligand>
</feature>
<feature type="binding site" evidence="3">
    <location>
        <position position="132"/>
    </location>
    <ligand>
        <name>Mg(2+)</name>
        <dbReference type="ChEBI" id="CHEBI:18420"/>
        <label>1</label>
    </ligand>
</feature>
<feature type="binding site" evidence="3">
    <location>
        <position position="132"/>
    </location>
    <ligand>
        <name>Mg(2+)</name>
        <dbReference type="ChEBI" id="CHEBI:18420"/>
        <label>2</label>
    </ligand>
</feature>
<feature type="binding site" evidence="3">
    <location>
        <position position="132"/>
    </location>
    <ligand>
        <name>Mn(2+)</name>
        <dbReference type="ChEBI" id="CHEBI:29035"/>
        <label>1</label>
    </ligand>
</feature>
<feature type="binding site" evidence="3">
    <location>
        <position position="132"/>
    </location>
    <ligand>
        <name>Mn(2+)</name>
        <dbReference type="ChEBI" id="CHEBI:29035"/>
        <label>2</label>
    </ligand>
</feature>
<feature type="binding site" evidence="3">
    <location>
        <position position="142"/>
    </location>
    <ligand>
        <name>Zn(2+)</name>
        <dbReference type="ChEBI" id="CHEBI:29105"/>
    </ligand>
</feature>
<feature type="binding site" evidence="3">
    <location>
        <position position="143"/>
    </location>
    <ligand>
        <name>Zn(2+)</name>
        <dbReference type="ChEBI" id="CHEBI:29105"/>
    </ligand>
</feature>
<feature type="binding site" evidence="3">
    <location>
        <position position="149"/>
    </location>
    <ligand>
        <name>Zn(2+)</name>
        <dbReference type="ChEBI" id="CHEBI:29105"/>
    </ligand>
</feature>
<feature type="binding site" evidence="3">
    <location>
        <position position="152"/>
    </location>
    <ligand>
        <name>Zn(2+)</name>
        <dbReference type="ChEBI" id="CHEBI:29105"/>
    </ligand>
</feature>
<feature type="binding site" evidence="3">
    <location>
        <begin position="181"/>
        <end position="187"/>
    </location>
    <ligand>
        <name>a ribonucleoside 5'-triphosphate</name>
        <dbReference type="ChEBI" id="CHEBI:61557"/>
    </ligand>
</feature>
<feature type="binding site" evidence="3">
    <location>
        <position position="347"/>
    </location>
    <ligand>
        <name>Mg(2+)</name>
        <dbReference type="ChEBI" id="CHEBI:18420"/>
        <label>2</label>
    </ligand>
</feature>
<feature type="binding site" evidence="3">
    <location>
        <position position="347"/>
    </location>
    <ligand>
        <name>Mn(2+)</name>
        <dbReference type="ChEBI" id="CHEBI:29035"/>
        <label>2</label>
    </ligand>
</feature>
<feature type="binding site" evidence="3">
    <location>
        <begin position="356"/>
        <end position="359"/>
    </location>
    <ligand>
        <name>a ribonucleoside 5'-triphosphate</name>
        <dbReference type="ChEBI" id="CHEBI:61557"/>
    </ligand>
</feature>
<feature type="binding site" evidence="3">
    <location>
        <position position="365"/>
    </location>
    <ligand>
        <name>a ribonucleoside 5'-triphosphate</name>
        <dbReference type="ChEBI" id="CHEBI:61557"/>
    </ligand>
</feature>